<name>AKAP4_RAT</name>
<accession>O35774</accession>
<evidence type="ECO:0000250" key="1">
    <source>
        <dbReference type="UniProtKB" id="Q5JQC9"/>
    </source>
</evidence>
<evidence type="ECO:0000250" key="2">
    <source>
        <dbReference type="UniProtKB" id="Q60662"/>
    </source>
</evidence>
<evidence type="ECO:0000255" key="3"/>
<evidence type="ECO:0000256" key="4">
    <source>
        <dbReference type="SAM" id="MobiDB-lite"/>
    </source>
</evidence>
<evidence type="ECO:0000269" key="5">
    <source>
    </source>
</evidence>
<evidence type="ECO:0000305" key="6"/>
<evidence type="ECO:0000312" key="7">
    <source>
        <dbReference type="EMBL" id="AAB62877.1"/>
    </source>
</evidence>
<evidence type="ECO:0000312" key="8">
    <source>
        <dbReference type="RGD" id="620828"/>
    </source>
</evidence>
<evidence type="ECO:0007744" key="9">
    <source>
    </source>
</evidence>
<dbReference type="EMBL" id="AF008114">
    <property type="protein sequence ID" value="AAB62877.1"/>
    <property type="molecule type" value="mRNA"/>
</dbReference>
<dbReference type="RefSeq" id="NP_077378.1">
    <property type="nucleotide sequence ID" value="NM_024402.1"/>
</dbReference>
<dbReference type="SMR" id="O35774"/>
<dbReference type="FunCoup" id="O35774">
    <property type="interactions" value="8"/>
</dbReference>
<dbReference type="STRING" id="10116.ENSRNOP00000003939"/>
<dbReference type="iPTMnet" id="O35774"/>
<dbReference type="PhosphoSitePlus" id="O35774"/>
<dbReference type="PaxDb" id="10116-ENSRNOP00000003939"/>
<dbReference type="GeneID" id="79254"/>
<dbReference type="KEGG" id="rno:79254"/>
<dbReference type="UCSC" id="RGD:620828">
    <property type="organism name" value="rat"/>
</dbReference>
<dbReference type="AGR" id="RGD:620828"/>
<dbReference type="CTD" id="8852"/>
<dbReference type="RGD" id="620828">
    <property type="gene designation" value="Akap4"/>
</dbReference>
<dbReference type="eggNOG" id="ENOG502QQXJ">
    <property type="taxonomic scope" value="Eukaryota"/>
</dbReference>
<dbReference type="InParanoid" id="O35774"/>
<dbReference type="OrthoDB" id="45290at9989"/>
<dbReference type="PhylomeDB" id="O35774"/>
<dbReference type="PRO" id="PR:O35774"/>
<dbReference type="Proteomes" id="UP000002494">
    <property type="component" value="Unplaced"/>
</dbReference>
<dbReference type="GO" id="GO:0005929">
    <property type="term" value="C:cilium"/>
    <property type="evidence" value="ECO:0000266"/>
    <property type="project" value="RGD"/>
</dbReference>
<dbReference type="GO" id="GO:0005737">
    <property type="term" value="C:cytoplasm"/>
    <property type="evidence" value="ECO:0000318"/>
    <property type="project" value="GO_Central"/>
</dbReference>
<dbReference type="GO" id="GO:0031514">
    <property type="term" value="C:motile cilium"/>
    <property type="evidence" value="ECO:0000250"/>
    <property type="project" value="UniProtKB"/>
</dbReference>
<dbReference type="GO" id="GO:0048471">
    <property type="term" value="C:perinuclear region of cytoplasm"/>
    <property type="evidence" value="ECO:0000266"/>
    <property type="project" value="RGD"/>
</dbReference>
<dbReference type="GO" id="GO:0097229">
    <property type="term" value="C:sperm end piece"/>
    <property type="evidence" value="ECO:0000266"/>
    <property type="project" value="RGD"/>
</dbReference>
<dbReference type="GO" id="GO:0035686">
    <property type="term" value="C:sperm fibrous sheath"/>
    <property type="evidence" value="ECO:0000266"/>
    <property type="project" value="RGD"/>
</dbReference>
<dbReference type="GO" id="GO:0036126">
    <property type="term" value="C:sperm flagellum"/>
    <property type="evidence" value="ECO:0000266"/>
    <property type="project" value="RGD"/>
</dbReference>
<dbReference type="GO" id="GO:0120212">
    <property type="term" value="C:sperm head-tail coupling apparatus"/>
    <property type="evidence" value="ECO:0000266"/>
    <property type="project" value="RGD"/>
</dbReference>
<dbReference type="GO" id="GO:0097225">
    <property type="term" value="C:sperm midpiece"/>
    <property type="evidence" value="ECO:0000266"/>
    <property type="project" value="RGD"/>
</dbReference>
<dbReference type="GO" id="GO:0097228">
    <property type="term" value="C:sperm principal piece"/>
    <property type="evidence" value="ECO:0000266"/>
    <property type="project" value="RGD"/>
</dbReference>
<dbReference type="GO" id="GO:0030018">
    <property type="term" value="C:Z disc"/>
    <property type="evidence" value="ECO:0000266"/>
    <property type="project" value="RGD"/>
</dbReference>
<dbReference type="GO" id="GO:0051018">
    <property type="term" value="F:protein kinase A binding"/>
    <property type="evidence" value="ECO:0000250"/>
    <property type="project" value="UniProtKB"/>
</dbReference>
<dbReference type="GO" id="GO:0007178">
    <property type="term" value="P:cell surface receptor protein serine/threonine kinase signaling pathway"/>
    <property type="evidence" value="ECO:0000266"/>
    <property type="project" value="RGD"/>
</dbReference>
<dbReference type="GO" id="GO:0051649">
    <property type="term" value="P:establishment of localization in cell"/>
    <property type="evidence" value="ECO:0000266"/>
    <property type="project" value="RGD"/>
</dbReference>
<dbReference type="GO" id="GO:0045184">
    <property type="term" value="P:establishment of protein localization"/>
    <property type="evidence" value="ECO:0000266"/>
    <property type="project" value="RGD"/>
</dbReference>
<dbReference type="GO" id="GO:0030317">
    <property type="term" value="P:flagellated sperm motility"/>
    <property type="evidence" value="ECO:0000250"/>
    <property type="project" value="UniProtKB"/>
</dbReference>
<dbReference type="GO" id="GO:0008104">
    <property type="term" value="P:protein localization"/>
    <property type="evidence" value="ECO:0000266"/>
    <property type="project" value="RGD"/>
</dbReference>
<dbReference type="GO" id="GO:0120316">
    <property type="term" value="P:sperm flagellum assembly"/>
    <property type="evidence" value="ECO:0000266"/>
    <property type="project" value="RGD"/>
</dbReference>
<dbReference type="GO" id="GO:0007283">
    <property type="term" value="P:spermatogenesis"/>
    <property type="evidence" value="ECO:0000266"/>
    <property type="project" value="RGD"/>
</dbReference>
<dbReference type="InterPro" id="IPR020799">
    <property type="entry name" value="AKAP_110"/>
</dbReference>
<dbReference type="InterPro" id="IPR018292">
    <property type="entry name" value="AKAP_110_C"/>
</dbReference>
<dbReference type="InterPro" id="IPR018459">
    <property type="entry name" value="RII-bd_1"/>
</dbReference>
<dbReference type="InterPro" id="IPR008382">
    <property type="entry name" value="SPHK1-interactor_AKAP_110"/>
</dbReference>
<dbReference type="PANTHER" id="PTHR10226">
    <property type="entry name" value="A KINASE ANCHOR PROTEIN"/>
    <property type="match status" value="1"/>
</dbReference>
<dbReference type="PANTHER" id="PTHR10226:SF8">
    <property type="entry name" value="A-KINASE ANCHOR PROTEIN 4"/>
    <property type="match status" value="1"/>
</dbReference>
<dbReference type="Pfam" id="PF05716">
    <property type="entry name" value="AKAP_110"/>
    <property type="match status" value="3"/>
</dbReference>
<dbReference type="Pfam" id="PF10522">
    <property type="entry name" value="RII_binding_1"/>
    <property type="match status" value="1"/>
</dbReference>
<dbReference type="SMART" id="SM00807">
    <property type="entry name" value="AKAP_110"/>
    <property type="match status" value="1"/>
</dbReference>
<feature type="propeptide" id="PRO_0000248232" evidence="3">
    <location>
        <begin position="1"/>
        <end position="187"/>
    </location>
</feature>
<feature type="chain" id="PRO_0000248233" description="A-kinase anchor protein 4" evidence="2">
    <location>
        <begin position="188"/>
        <end position="847"/>
    </location>
</feature>
<feature type="region of interest" description="Disordered" evidence="4">
    <location>
        <begin position="182"/>
        <end position="209"/>
    </location>
</feature>
<feature type="region of interest" description="Interaction with Prkar1a and Prkar2a" evidence="2">
    <location>
        <begin position="218"/>
        <end position="231"/>
    </location>
</feature>
<feature type="region of interest" description="PKA-RI subunit binding domain" evidence="2">
    <location>
        <begin position="334"/>
        <end position="343"/>
    </location>
</feature>
<feature type="region of interest" description="Disordered" evidence="4">
    <location>
        <begin position="511"/>
        <end position="536"/>
    </location>
</feature>
<feature type="region of interest" description="Disordered" evidence="4">
    <location>
        <begin position="583"/>
        <end position="613"/>
    </location>
</feature>
<feature type="region of interest" description="Disordered" evidence="4">
    <location>
        <begin position="655"/>
        <end position="677"/>
    </location>
</feature>
<feature type="compositionally biased region" description="Polar residues" evidence="4">
    <location>
        <begin position="182"/>
        <end position="204"/>
    </location>
</feature>
<feature type="compositionally biased region" description="Basic and acidic residues" evidence="4">
    <location>
        <begin position="524"/>
        <end position="533"/>
    </location>
</feature>
<feature type="modified residue" description="Phosphoserine" evidence="9">
    <location>
        <position position="95"/>
    </location>
</feature>
<feature type="modified residue" description="Phosphoserine" evidence="9">
    <location>
        <position position="129"/>
    </location>
</feature>
<feature type="modified residue" description="Phosphoserine" evidence="9">
    <location>
        <position position="189"/>
    </location>
</feature>
<feature type="modified residue" description="Phosphoserine" evidence="9">
    <location>
        <position position="203"/>
    </location>
</feature>
<feature type="modified residue" description="Phosphothreonine" evidence="9">
    <location>
        <position position="206"/>
    </location>
</feature>
<feature type="modified residue" description="Phosphoserine" evidence="9">
    <location>
        <position position="212"/>
    </location>
</feature>
<feature type="modified residue" description="Phosphoserine" evidence="9">
    <location>
        <position position="225"/>
    </location>
</feature>
<feature type="modified residue" description="Phosphoserine" evidence="9">
    <location>
        <position position="270"/>
    </location>
</feature>
<feature type="modified residue" description="Phosphotyrosine" evidence="1">
    <location>
        <position position="300"/>
    </location>
</feature>
<feature type="modified residue" description="Phosphoserine" evidence="9">
    <location>
        <position position="301"/>
    </location>
</feature>
<feature type="modified residue" description="Phosphoserine" evidence="9">
    <location>
        <position position="304"/>
    </location>
</feature>
<feature type="modified residue" description="Phosphoserine" evidence="9">
    <location>
        <position position="340"/>
    </location>
</feature>
<feature type="modified residue" description="Phosphoserine" evidence="9">
    <location>
        <position position="430"/>
    </location>
</feature>
<feature type="modified residue" description="Phosphoserine" evidence="9">
    <location>
        <position position="441"/>
    </location>
</feature>
<feature type="modified residue" description="Phosphoserine" evidence="9">
    <location>
        <position position="443"/>
    </location>
</feature>
<feature type="modified residue" description="Phosphoserine" evidence="9">
    <location>
        <position position="462"/>
    </location>
</feature>
<feature type="modified residue" description="Phosphoserine" evidence="9">
    <location>
        <position position="491"/>
    </location>
</feature>
<feature type="modified residue" description="Phosphoserine" evidence="9">
    <location>
        <position position="496"/>
    </location>
</feature>
<feature type="modified residue" description="Phosphoserine" evidence="9">
    <location>
        <position position="503"/>
    </location>
</feature>
<feature type="modified residue" description="Phosphothreonine" evidence="9">
    <location>
        <position position="505"/>
    </location>
</feature>
<feature type="modified residue" description="Phosphoserine" evidence="9">
    <location>
        <position position="536"/>
    </location>
</feature>
<feature type="modified residue" description="Phosphoserine" evidence="2">
    <location>
        <position position="581"/>
    </location>
</feature>
<feature type="modified residue" description="Phosphoserine" evidence="9">
    <location>
        <position position="626"/>
    </location>
</feature>
<feature type="modified residue" description="Phosphoserine" evidence="9">
    <location>
        <position position="631"/>
    </location>
</feature>
<feature type="modified residue" description="Phosphoserine" evidence="9">
    <location>
        <position position="648"/>
    </location>
</feature>
<feature type="modified residue" description="Phosphoserine" evidence="9">
    <location>
        <position position="650"/>
    </location>
</feature>
<feature type="modified residue" description="Phosphoserine" evidence="9">
    <location>
        <position position="674"/>
    </location>
</feature>
<feature type="modified residue" description="Phosphoserine" evidence="9">
    <location>
        <position position="677"/>
    </location>
</feature>
<feature type="modified residue" description="Phosphoserine" evidence="9">
    <location>
        <position position="700"/>
    </location>
</feature>
<feature type="modified residue" description="Phosphoserine" evidence="9">
    <location>
        <position position="729"/>
    </location>
</feature>
<sequence length="847" mass="93494">MIAYCGTTKMSDDIDWLHSRRGVCKVDLYSPEGQQDQDRKVICFVDVSTLNVEDDSKGAAGPRSDGELNLENLEEKEIIVIKDTEKQDQPKTEGSVCLFKQAPSDPISVLNWLLNDLQKYALGFQHALSPSASSCKHKVGDLEGDYHKIPSENCYSVYADQVNLDYLNKGPQNLRLEMAASKNTNNNQSPSNPATKSPSNQRSVATPDGECSMDDLSYYVNRLSSLVIQMARKEIKDKLEGGNKCLHHSMYTSGEKGKTSPRSAVSKIASEMAHEAVELTSSEMRGNGEEGRDGRKTFLYSELSNKNKCGEKQQMCPKDSKEFADSISKGLMVYANQVASDMMVSVMKTLKVHSCGKPIPACVVLKRVLLKHTKEIVSDLIDSCMKNLHNITGVLMTDSDFVSAVKRNLFNHGKQNAADIMEAMLKRLVSALLGEKKETKSQSLAYATLKAGTHDPKCKNQSLEFSAMKAEMKGKDKGKTKGDPCCKSLTSAERVSEHILKESLTMWNNQKQGTQGRVPNKVCPSKDEKREKISPSTDSLAKDLIVSALMLIQYHLTQQAKGKDPCEEECPGSSMGYMSQSAQYEKSGGGQSSKSLSMKHFESRGAPGPSTCAKENQLESQKMDMSNMVLSLIQKLLSESPFSCDELSESENKRCCDSRSKQAAPVAKRPEDQSQDSTEMDFISGMKQMNRQFIDQLVESVMKLCLIMAKYSNNGAALAELEEQAALASNGPRCGREAVMSQSYLETPGPEVIVNNQCSTSNLQKQLQAVLQWIAASQFNVPMLYFMGDDDGQLEKLPEVSAKAAEKGYSVGDLLQEVMKFAKERQLDEAVGNMARKQLLDWLLANL</sequence>
<proteinExistence type="evidence at protein level"/>
<gene>
    <name evidence="8" type="primary">Akap4</name>
</gene>
<reference evidence="7" key="1">
    <citation type="submission" date="1997-06" db="EMBL/GenBank/DDBJ databases">
        <title>Molecular cloning and developmental expression of the 75 kDa protein of the rat fibrous sheath.</title>
        <authorList>
            <person name="El-Alfy M."/>
            <person name="Moshonas D."/>
            <person name="Morales C."/>
            <person name="Oko R."/>
        </authorList>
    </citation>
    <scope>NUCLEOTIDE SEQUENCE [MRNA]</scope>
    <source>
        <strain evidence="7">Sprague-Dawley</strain>
    </source>
</reference>
<reference key="2">
    <citation type="journal article" date="2009" name="Reproduction">
        <title>Identification of novel immunodominant epididymal sperm proteins using combinatorial approach.</title>
        <authorList>
            <person name="Khan S.A."/>
            <person name="Suryawanshi A.R."/>
            <person name="Ranpura S.A."/>
            <person name="Jadhav S.V."/>
            <person name="Khole V.V."/>
        </authorList>
    </citation>
    <scope>IDENTIFICATION BY MASS SPECTROMETRY</scope>
    <scope>TISSUE SPECIFICITY</scope>
</reference>
<reference key="3">
    <citation type="journal article" date="2012" name="Nat. Commun.">
        <title>Quantitative maps of protein phosphorylation sites across 14 different rat organs and tissues.</title>
        <authorList>
            <person name="Lundby A."/>
            <person name="Secher A."/>
            <person name="Lage K."/>
            <person name="Nordsborg N.B."/>
            <person name="Dmytriyev A."/>
            <person name="Lundby C."/>
            <person name="Olsen J.V."/>
        </authorList>
    </citation>
    <scope>PHOSPHORYLATION [LARGE SCALE ANALYSIS] AT SER-95; SER-129; SER-189; SER-203; THR-206; SER-212; SER-225; SER-270; SER-301; SER-304; SER-340; SER-430; SER-441; SER-443; SER-462; SER-491; SER-496; SER-503; THR-505; SER-536; SER-626; SER-631; SER-648; SER-650; SER-674; SER-677; SER-700 AND SER-729</scope>
    <scope>IDENTIFICATION BY MASS SPECTROMETRY [LARGE SCALE ANALYSIS]</scope>
</reference>
<protein>
    <recommendedName>
        <fullName>A-kinase anchor protein 4</fullName>
        <shortName>AKAP-4</shortName>
    </recommendedName>
    <alternativeName>
        <fullName>75 kDa fibrous sheath protein</fullName>
    </alternativeName>
    <alternativeName>
        <fullName>Major sperm fibrous sheath protein</fullName>
    </alternativeName>
    <alternativeName>
        <fullName>Protein kinase A-anchoring protein 4</fullName>
        <shortName>PRKA4</shortName>
    </alternativeName>
</protein>
<comment type="function">
    <text evidence="1">Major structural component of sperm fibrous sheath. May play a role in sperm motility (By similarity).</text>
</comment>
<comment type="subunit">
    <text evidence="1 2">Interacts with PRKAR1A and PRKAR2A. Interacts with ENO4 (By similarity). Interacts with QRICH2 (By similarity).</text>
</comment>
<comment type="subcellular location">
    <subcellularLocation>
        <location evidence="1">Cell projection</location>
        <location evidence="1">Cilium</location>
        <location evidence="1">Flagellum</location>
    </subcellularLocation>
    <text evidence="1">Localizes to the principle piece of the sperm flagellum.</text>
</comment>
<comment type="tissue specificity">
    <text evidence="5">Expressed in flagella of epididymal sperm.</text>
</comment>
<comment type="domain">
    <text evidence="2">RI-alpha binding site, predicted to form an amphipathic helix that is required for binding to Prkar1a.</text>
</comment>
<comment type="PTM">
    <text evidence="2">Phosphorylated by STK33 during sperm flagella assembly.</text>
</comment>
<comment type="similarity">
    <text evidence="6">Belongs to the AKAP110 family.</text>
</comment>
<organism>
    <name type="scientific">Rattus norvegicus</name>
    <name type="common">Rat</name>
    <dbReference type="NCBI Taxonomy" id="10116"/>
    <lineage>
        <taxon>Eukaryota</taxon>
        <taxon>Metazoa</taxon>
        <taxon>Chordata</taxon>
        <taxon>Craniata</taxon>
        <taxon>Vertebrata</taxon>
        <taxon>Euteleostomi</taxon>
        <taxon>Mammalia</taxon>
        <taxon>Eutheria</taxon>
        <taxon>Euarchontoglires</taxon>
        <taxon>Glires</taxon>
        <taxon>Rodentia</taxon>
        <taxon>Myomorpha</taxon>
        <taxon>Muroidea</taxon>
        <taxon>Muridae</taxon>
        <taxon>Murinae</taxon>
        <taxon>Rattus</taxon>
    </lineage>
</organism>
<keyword id="KW-0966">Cell projection</keyword>
<keyword id="KW-0969">Cilium</keyword>
<keyword id="KW-0970">Cilium biogenesis/degradation</keyword>
<keyword id="KW-0282">Flagellum</keyword>
<keyword id="KW-0597">Phosphoprotein</keyword>
<keyword id="KW-1185">Reference proteome</keyword>